<organism>
    <name type="scientific">Neurospora crassa (strain ATCC 24698 / 74-OR23-1A / CBS 708.71 / DSM 1257 / FGSC 987)</name>
    <dbReference type="NCBI Taxonomy" id="367110"/>
    <lineage>
        <taxon>Eukaryota</taxon>
        <taxon>Fungi</taxon>
        <taxon>Dikarya</taxon>
        <taxon>Ascomycota</taxon>
        <taxon>Pezizomycotina</taxon>
        <taxon>Sordariomycetes</taxon>
        <taxon>Sordariomycetidae</taxon>
        <taxon>Sordariales</taxon>
        <taxon>Sordariaceae</taxon>
        <taxon>Neurospora</taxon>
    </lineage>
</organism>
<dbReference type="EC" id="3.2.1.91"/>
<dbReference type="EMBL" id="X77778">
    <property type="protein sequence ID" value="CAA54815.1"/>
    <property type="molecule type" value="Genomic_DNA"/>
</dbReference>
<dbReference type="PIR" id="S42093">
    <property type="entry name" value="S42093"/>
</dbReference>
<dbReference type="SMR" id="P38676"/>
<dbReference type="CAZy" id="CBM1">
    <property type="family name" value="Carbohydrate-Binding Module Family 1"/>
</dbReference>
<dbReference type="CAZy" id="GH7">
    <property type="family name" value="Glycoside Hydrolase Family 7"/>
</dbReference>
<dbReference type="GlyCosmos" id="P38676">
    <property type="glycosylation" value="2 sites, No reported glycans"/>
</dbReference>
<dbReference type="GO" id="GO:0005576">
    <property type="term" value="C:extracellular region"/>
    <property type="evidence" value="ECO:0007669"/>
    <property type="project" value="UniProtKB-SubCell"/>
</dbReference>
<dbReference type="GO" id="GO:0016162">
    <property type="term" value="F:cellulose 1,4-beta-cellobiosidase activity"/>
    <property type="evidence" value="ECO:0007669"/>
    <property type="project" value="UniProtKB-EC"/>
</dbReference>
<dbReference type="GO" id="GO:0030248">
    <property type="term" value="F:cellulose binding"/>
    <property type="evidence" value="ECO:0007669"/>
    <property type="project" value="InterPro"/>
</dbReference>
<dbReference type="GO" id="GO:0030245">
    <property type="term" value="P:cellulose catabolic process"/>
    <property type="evidence" value="ECO:0007669"/>
    <property type="project" value="UniProtKB-KW"/>
</dbReference>
<dbReference type="CDD" id="cd07999">
    <property type="entry name" value="GH7_CBH_EG"/>
    <property type="match status" value="1"/>
</dbReference>
<dbReference type="FunFam" id="2.70.100.10:FF:000001">
    <property type="entry name" value="Glucanase"/>
    <property type="match status" value="1"/>
</dbReference>
<dbReference type="Gene3D" id="2.70.100.10">
    <property type="entry name" value="Glycoside hydrolase, family 7, domain"/>
    <property type="match status" value="1"/>
</dbReference>
<dbReference type="InterPro" id="IPR035971">
    <property type="entry name" value="CBD_sf"/>
</dbReference>
<dbReference type="InterPro" id="IPR000254">
    <property type="entry name" value="Cellulose-bd_dom_fun"/>
</dbReference>
<dbReference type="InterPro" id="IPR013320">
    <property type="entry name" value="ConA-like_dom_sf"/>
</dbReference>
<dbReference type="InterPro" id="IPR001722">
    <property type="entry name" value="Glyco_hydro_7"/>
</dbReference>
<dbReference type="InterPro" id="IPR037019">
    <property type="entry name" value="Glyco_hydro_7_sf"/>
</dbReference>
<dbReference type="PANTHER" id="PTHR33753">
    <property type="entry name" value="1,4-BETA-D-GLUCAN CELLOBIOHYDROLASE B"/>
    <property type="match status" value="1"/>
</dbReference>
<dbReference type="PANTHER" id="PTHR33753:SF2">
    <property type="entry name" value="GLYCOSIDE HYDROLASE FAMILY 7 PROTEIN"/>
    <property type="match status" value="1"/>
</dbReference>
<dbReference type="Pfam" id="PF00734">
    <property type="entry name" value="CBM_1"/>
    <property type="match status" value="1"/>
</dbReference>
<dbReference type="Pfam" id="PF00840">
    <property type="entry name" value="Glyco_hydro_7"/>
    <property type="match status" value="1"/>
</dbReference>
<dbReference type="PRINTS" id="PR00734">
    <property type="entry name" value="GLHYDRLASE7"/>
</dbReference>
<dbReference type="SMART" id="SM00236">
    <property type="entry name" value="fCBD"/>
    <property type="match status" value="1"/>
</dbReference>
<dbReference type="SUPFAM" id="SSF57180">
    <property type="entry name" value="Cellulose-binding domain"/>
    <property type="match status" value="1"/>
</dbReference>
<dbReference type="SUPFAM" id="SSF49899">
    <property type="entry name" value="Concanavalin A-like lectins/glucanases"/>
    <property type="match status" value="1"/>
</dbReference>
<dbReference type="PROSITE" id="PS00562">
    <property type="entry name" value="CBM1_1"/>
    <property type="match status" value="1"/>
</dbReference>
<dbReference type="PROSITE" id="PS51164">
    <property type="entry name" value="CBM1_2"/>
    <property type="match status" value="1"/>
</dbReference>
<feature type="signal peptide" evidence="2">
    <location>
        <begin position="1"/>
        <end position="17"/>
    </location>
</feature>
<feature type="chain" id="PRO_0000007922" description="Exoglucanase 1">
    <location>
        <begin position="18"/>
        <end position="516"/>
    </location>
</feature>
<feature type="domain" description="CBM1" evidence="3">
    <location>
        <begin position="480"/>
        <end position="516"/>
    </location>
</feature>
<feature type="region of interest" description="Catalytic">
    <location>
        <begin position="18"/>
        <end position="445"/>
    </location>
</feature>
<feature type="region of interest" description="Disordered" evidence="4">
    <location>
        <begin position="444"/>
        <end position="481"/>
    </location>
</feature>
<feature type="region of interest" description="Linker">
    <location>
        <begin position="446"/>
        <end position="480"/>
    </location>
</feature>
<feature type="compositionally biased region" description="Low complexity" evidence="4">
    <location>
        <begin position="449"/>
        <end position="481"/>
    </location>
</feature>
<feature type="active site" description="Nucleophile" evidence="1">
    <location>
        <position position="223"/>
    </location>
</feature>
<feature type="active site" description="Proton donor" evidence="1">
    <location>
        <position position="228"/>
    </location>
</feature>
<feature type="glycosylation site" description="N-linked (GlcNAc...) asparagine" evidence="2">
    <location>
        <position position="45"/>
    </location>
</feature>
<feature type="glycosylation site" description="N-linked (GlcNAc...) asparagine" evidence="2">
    <location>
        <position position="281"/>
    </location>
</feature>
<feature type="disulfide bond" evidence="1">
    <location>
        <begin position="488"/>
        <end position="505"/>
    </location>
</feature>
<feature type="disulfide bond" evidence="1">
    <location>
        <begin position="499"/>
        <end position="515"/>
    </location>
</feature>
<keyword id="KW-0119">Carbohydrate metabolism</keyword>
<keyword id="KW-0136">Cellulose degradation</keyword>
<keyword id="KW-1015">Disulfide bond</keyword>
<keyword id="KW-0325">Glycoprotein</keyword>
<keyword id="KW-0326">Glycosidase</keyword>
<keyword id="KW-0378">Hydrolase</keyword>
<keyword id="KW-0624">Polysaccharide degradation</keyword>
<keyword id="KW-0964">Secreted</keyword>
<keyword id="KW-0732">Signal</keyword>
<proteinExistence type="inferred from homology"/>
<accession>P38676</accession>
<comment type="catalytic activity">
    <reaction>
        <text>Hydrolysis of (1-&gt;4)-beta-D-glucosidic linkages in cellulose and cellotetraose, releasing cellobiose from the non-reducing ends of the chains.</text>
        <dbReference type="EC" id="3.2.1.91"/>
    </reaction>
</comment>
<comment type="subcellular location">
    <subcellularLocation>
        <location>Secreted</location>
    </subcellularLocation>
</comment>
<comment type="similarity">
    <text evidence="5">Belongs to the glycosyl hydrolase 7 (cellulase C) family.</text>
</comment>
<comment type="caution">
    <text evidence="5">This protein, although sequenced from the genome of strain 74-OR23-1A, has only limited sequence identity to the corresponding protein produced by the locus NCU07340 determined in the complete genome sequence of Neurospora crassa 74-OR23-1A, due to extensive nucleotide sequence discrepancies mostly in the N-terminus.</text>
</comment>
<name>GUX1B_NEUCR</name>
<reference key="1">
    <citation type="journal article" date="1995" name="Gene">
        <title>The cellulase complex of Neurospora crassa: cbh-1 cloning, sequencing and homologies.</title>
        <authorList>
            <person name="Taleb F."/>
            <person name="Radford A."/>
        </authorList>
    </citation>
    <scope>NUCLEOTIDE SEQUENCE [GENOMIC DNA]</scope>
    <source>
        <strain>ATCC 24698 / 74-OR23-1A / CBS 708.71 / DSM 1257 / FGSC 987</strain>
    </source>
</reference>
<protein>
    <recommendedName>
        <fullName>Exoglucanase 1</fullName>
        <ecNumber>3.2.1.91</ecNumber>
    </recommendedName>
    <alternativeName>
        <fullName>1,4-beta-cellobiohydrolase 1</fullName>
    </alternativeName>
    <alternativeName>
        <fullName>Exocellobiohydrolase 1</fullName>
    </alternativeName>
</protein>
<gene>
    <name type="primary">cbh-1</name>
</gene>
<sequence>MRASLLAFSLAAAVAGGQQAGTLTAKRHPSLTWQKCTRGGCPTLNTTMVLDANWRWTHATSGSTKCYTGNKWQATLCPDGKSCAANCALDGADYTGTYGITGSGWSLTLQFVTDNVGARAYLMADDTQYQMLELLNQELWFDVDMSNIPCGLNGALYLSAMDADGGMRKYPTNKAGAKYATGYCDAQCPRDLKYINGIANVEGWTPSTNDANGIGDHGSCCSEMDIWEANKVSTAFTPHPCTTIEQHMCEGDSCGGTYSDDRYGVLCDADGCDFNSYRMGNTTFYGEGKTVDTSSKFTVVTQFIKDSAGDLAEIKAFYVQNGKVIENSQSNVDGVSGNSITQSFCKSQKTAFGDIDDFNKKGGLKQMGKALAQAMVLVMSIWDDHAANMLWLDSTYPVPKVPGAYRGSGPTTSGVPAEVDANAPNSKVAFSNIKFGHLGISPFSGGSSGTPPSNPSSSASPTSSTAKPSSTSTASNPSGTGAAHWAQCGGIGFSGPTTCPEPYTCAKDHDIYSQCV</sequence>
<evidence type="ECO:0000250" key="1"/>
<evidence type="ECO:0000255" key="2"/>
<evidence type="ECO:0000255" key="3">
    <source>
        <dbReference type="PROSITE-ProRule" id="PRU00597"/>
    </source>
</evidence>
<evidence type="ECO:0000256" key="4">
    <source>
        <dbReference type="SAM" id="MobiDB-lite"/>
    </source>
</evidence>
<evidence type="ECO:0000305" key="5"/>